<dbReference type="EC" id="1.11.1.21" evidence="1"/>
<dbReference type="EMBL" id="AE003849">
    <property type="protein sequence ID" value="AAF85031.1"/>
    <property type="molecule type" value="Genomic_DNA"/>
</dbReference>
<dbReference type="PIR" id="F82584">
    <property type="entry name" value="F82584"/>
</dbReference>
<dbReference type="SMR" id="Q9PBB2"/>
<dbReference type="STRING" id="160492.XF_2232"/>
<dbReference type="PeroxiBase" id="2320">
    <property type="entry name" value="XfCP01_9a5c"/>
</dbReference>
<dbReference type="KEGG" id="xfa:XF_2232"/>
<dbReference type="eggNOG" id="COG0376">
    <property type="taxonomic scope" value="Bacteria"/>
</dbReference>
<dbReference type="HOGENOM" id="CLU_025424_2_0_6"/>
<dbReference type="Proteomes" id="UP000000812">
    <property type="component" value="Chromosome"/>
</dbReference>
<dbReference type="GO" id="GO:0005829">
    <property type="term" value="C:cytosol"/>
    <property type="evidence" value="ECO:0007669"/>
    <property type="project" value="TreeGrafter"/>
</dbReference>
<dbReference type="GO" id="GO:0004096">
    <property type="term" value="F:catalase activity"/>
    <property type="evidence" value="ECO:0007669"/>
    <property type="project" value="UniProtKB-UniRule"/>
</dbReference>
<dbReference type="GO" id="GO:0020037">
    <property type="term" value="F:heme binding"/>
    <property type="evidence" value="ECO:0007669"/>
    <property type="project" value="InterPro"/>
</dbReference>
<dbReference type="GO" id="GO:0046872">
    <property type="term" value="F:metal ion binding"/>
    <property type="evidence" value="ECO:0007669"/>
    <property type="project" value="UniProtKB-KW"/>
</dbReference>
<dbReference type="GO" id="GO:0070301">
    <property type="term" value="P:cellular response to hydrogen peroxide"/>
    <property type="evidence" value="ECO:0007669"/>
    <property type="project" value="TreeGrafter"/>
</dbReference>
<dbReference type="GO" id="GO:0042744">
    <property type="term" value="P:hydrogen peroxide catabolic process"/>
    <property type="evidence" value="ECO:0007669"/>
    <property type="project" value="UniProtKB-KW"/>
</dbReference>
<dbReference type="CDD" id="cd00649">
    <property type="entry name" value="catalase_peroxidase_1"/>
    <property type="match status" value="1"/>
</dbReference>
<dbReference type="CDD" id="cd08200">
    <property type="entry name" value="catalase_peroxidase_2"/>
    <property type="match status" value="1"/>
</dbReference>
<dbReference type="FunFam" id="1.10.420.10:FF:000002">
    <property type="entry name" value="Catalase-peroxidase"/>
    <property type="match status" value="1"/>
</dbReference>
<dbReference type="FunFam" id="1.10.420.10:FF:000004">
    <property type="entry name" value="Catalase-peroxidase"/>
    <property type="match status" value="1"/>
</dbReference>
<dbReference type="FunFam" id="1.10.520.10:FF:000002">
    <property type="entry name" value="Catalase-peroxidase"/>
    <property type="match status" value="1"/>
</dbReference>
<dbReference type="Gene3D" id="1.10.520.10">
    <property type="match status" value="2"/>
</dbReference>
<dbReference type="Gene3D" id="1.10.420.10">
    <property type="entry name" value="Peroxidase, domain 2"/>
    <property type="match status" value="2"/>
</dbReference>
<dbReference type="HAMAP" id="MF_01961">
    <property type="entry name" value="Catal_peroxid"/>
    <property type="match status" value="1"/>
</dbReference>
<dbReference type="InterPro" id="IPR000763">
    <property type="entry name" value="Catalase_peroxidase"/>
</dbReference>
<dbReference type="InterPro" id="IPR002016">
    <property type="entry name" value="Haem_peroxidase"/>
</dbReference>
<dbReference type="InterPro" id="IPR010255">
    <property type="entry name" value="Haem_peroxidase_sf"/>
</dbReference>
<dbReference type="InterPro" id="IPR019794">
    <property type="entry name" value="Peroxidases_AS"/>
</dbReference>
<dbReference type="InterPro" id="IPR019793">
    <property type="entry name" value="Peroxidases_heam-ligand_BS"/>
</dbReference>
<dbReference type="NCBIfam" id="TIGR00198">
    <property type="entry name" value="cat_per_HPI"/>
    <property type="match status" value="1"/>
</dbReference>
<dbReference type="NCBIfam" id="NF011635">
    <property type="entry name" value="PRK15061.1"/>
    <property type="match status" value="1"/>
</dbReference>
<dbReference type="PANTHER" id="PTHR30555:SF0">
    <property type="entry name" value="CATALASE-PEROXIDASE"/>
    <property type="match status" value="1"/>
</dbReference>
<dbReference type="PANTHER" id="PTHR30555">
    <property type="entry name" value="HYDROPEROXIDASE I, BIFUNCTIONAL CATALASE-PEROXIDASE"/>
    <property type="match status" value="1"/>
</dbReference>
<dbReference type="Pfam" id="PF00141">
    <property type="entry name" value="peroxidase"/>
    <property type="match status" value="2"/>
</dbReference>
<dbReference type="PRINTS" id="PR00460">
    <property type="entry name" value="BPEROXIDASE"/>
</dbReference>
<dbReference type="PRINTS" id="PR00458">
    <property type="entry name" value="PEROXIDASE"/>
</dbReference>
<dbReference type="SUPFAM" id="SSF48113">
    <property type="entry name" value="Heme-dependent peroxidases"/>
    <property type="match status" value="2"/>
</dbReference>
<dbReference type="PROSITE" id="PS00435">
    <property type="entry name" value="PEROXIDASE_1"/>
    <property type="match status" value="1"/>
</dbReference>
<dbReference type="PROSITE" id="PS00436">
    <property type="entry name" value="PEROXIDASE_2"/>
    <property type="match status" value="1"/>
</dbReference>
<dbReference type="PROSITE" id="PS50873">
    <property type="entry name" value="PEROXIDASE_4"/>
    <property type="match status" value="1"/>
</dbReference>
<name>KATG_XYLFA</name>
<organism>
    <name type="scientific">Xylella fastidiosa (strain 9a5c)</name>
    <dbReference type="NCBI Taxonomy" id="160492"/>
    <lineage>
        <taxon>Bacteria</taxon>
        <taxon>Pseudomonadati</taxon>
        <taxon>Pseudomonadota</taxon>
        <taxon>Gammaproteobacteria</taxon>
        <taxon>Lysobacterales</taxon>
        <taxon>Lysobacteraceae</taxon>
        <taxon>Xylella</taxon>
    </lineage>
</organism>
<evidence type="ECO:0000255" key="1">
    <source>
        <dbReference type="HAMAP-Rule" id="MF_01961"/>
    </source>
</evidence>
<evidence type="ECO:0000256" key="2">
    <source>
        <dbReference type="SAM" id="MobiDB-lite"/>
    </source>
</evidence>
<reference key="1">
    <citation type="journal article" date="2000" name="Nature">
        <title>The genome sequence of the plant pathogen Xylella fastidiosa.</title>
        <authorList>
            <person name="Simpson A.J.G."/>
            <person name="Reinach F.C."/>
            <person name="Arruda P."/>
            <person name="Abreu F.A."/>
            <person name="Acencio M."/>
            <person name="Alvarenga R."/>
            <person name="Alves L.M.C."/>
            <person name="Araya J.E."/>
            <person name="Baia G.S."/>
            <person name="Baptista C.S."/>
            <person name="Barros M.H."/>
            <person name="Bonaccorsi E.D."/>
            <person name="Bordin S."/>
            <person name="Bove J.M."/>
            <person name="Briones M.R.S."/>
            <person name="Bueno M.R.P."/>
            <person name="Camargo A.A."/>
            <person name="Camargo L.E.A."/>
            <person name="Carraro D.M."/>
            <person name="Carrer H."/>
            <person name="Colauto N.B."/>
            <person name="Colombo C."/>
            <person name="Costa F.F."/>
            <person name="Costa M.C.R."/>
            <person name="Costa-Neto C.M."/>
            <person name="Coutinho L.L."/>
            <person name="Cristofani M."/>
            <person name="Dias-Neto E."/>
            <person name="Docena C."/>
            <person name="El-Dorry H."/>
            <person name="Facincani A.P."/>
            <person name="Ferreira A.J.S."/>
            <person name="Ferreira V.C.A."/>
            <person name="Ferro J.A."/>
            <person name="Fraga J.S."/>
            <person name="Franca S.C."/>
            <person name="Franco M.C."/>
            <person name="Frohme M."/>
            <person name="Furlan L.R."/>
            <person name="Garnier M."/>
            <person name="Goldman G.H."/>
            <person name="Goldman M.H.S."/>
            <person name="Gomes S.L."/>
            <person name="Gruber A."/>
            <person name="Ho P.L."/>
            <person name="Hoheisel J.D."/>
            <person name="Junqueira M.L."/>
            <person name="Kemper E.L."/>
            <person name="Kitajima J.P."/>
            <person name="Krieger J.E."/>
            <person name="Kuramae E.E."/>
            <person name="Laigret F."/>
            <person name="Lambais M.R."/>
            <person name="Leite L.C.C."/>
            <person name="Lemos E.G.M."/>
            <person name="Lemos M.V.F."/>
            <person name="Lopes S.A."/>
            <person name="Lopes C.R."/>
            <person name="Machado J.A."/>
            <person name="Machado M.A."/>
            <person name="Madeira A.M.B.N."/>
            <person name="Madeira H.M.F."/>
            <person name="Marino C.L."/>
            <person name="Marques M.V."/>
            <person name="Martins E.A.L."/>
            <person name="Martins E.M.F."/>
            <person name="Matsukuma A.Y."/>
            <person name="Menck C.F.M."/>
            <person name="Miracca E.C."/>
            <person name="Miyaki C.Y."/>
            <person name="Monteiro-Vitorello C.B."/>
            <person name="Moon D.H."/>
            <person name="Nagai M.A."/>
            <person name="Nascimento A.L.T.O."/>
            <person name="Netto L.E.S."/>
            <person name="Nhani A. Jr."/>
            <person name="Nobrega F.G."/>
            <person name="Nunes L.R."/>
            <person name="Oliveira M.A."/>
            <person name="de Oliveira M.C."/>
            <person name="de Oliveira R.C."/>
            <person name="Palmieri D.A."/>
            <person name="Paris A."/>
            <person name="Peixoto B.R."/>
            <person name="Pereira G.A.G."/>
            <person name="Pereira H.A. Jr."/>
            <person name="Pesquero J.B."/>
            <person name="Quaggio R.B."/>
            <person name="Roberto P.G."/>
            <person name="Rodrigues V."/>
            <person name="de Rosa A.J.M."/>
            <person name="de Rosa V.E. Jr."/>
            <person name="de Sa R.G."/>
            <person name="Santelli R.V."/>
            <person name="Sawasaki H.E."/>
            <person name="da Silva A.C.R."/>
            <person name="da Silva A.M."/>
            <person name="da Silva F.R."/>
            <person name="Silva W.A. Jr."/>
            <person name="da Silveira J.F."/>
            <person name="Silvestri M.L.Z."/>
            <person name="Siqueira W.J."/>
            <person name="de Souza A.A."/>
            <person name="de Souza A.P."/>
            <person name="Terenzi M.F."/>
            <person name="Truffi D."/>
            <person name="Tsai S.M."/>
            <person name="Tsuhako M.H."/>
            <person name="Vallada H."/>
            <person name="Van Sluys M.A."/>
            <person name="Verjovski-Almeida S."/>
            <person name="Vettore A.L."/>
            <person name="Zago M.A."/>
            <person name="Zatz M."/>
            <person name="Meidanis J."/>
            <person name="Setubal J.C."/>
        </authorList>
    </citation>
    <scope>NUCLEOTIDE SEQUENCE [LARGE SCALE GENOMIC DNA]</scope>
    <source>
        <strain>9a5c</strain>
    </source>
</reference>
<accession>Q9PBB2</accession>
<feature type="signal peptide" evidence="1">
    <location>
        <begin position="1"/>
        <end position="20"/>
    </location>
</feature>
<feature type="chain" id="PRO_0000354959" description="Catalase-peroxidase">
    <location>
        <begin position="21"/>
        <end position="781"/>
    </location>
</feature>
<feature type="region of interest" description="Disordered" evidence="2">
    <location>
        <begin position="237"/>
        <end position="256"/>
    </location>
</feature>
<feature type="region of interest" description="Disordered" evidence="2">
    <location>
        <begin position="317"/>
        <end position="336"/>
    </location>
</feature>
<feature type="active site" description="Proton acceptor" evidence="1">
    <location>
        <position position="126"/>
    </location>
</feature>
<feature type="binding site" description="axial binding residue" evidence="1">
    <location>
        <position position="313"/>
    </location>
    <ligand>
        <name>heme b</name>
        <dbReference type="ChEBI" id="CHEBI:60344"/>
    </ligand>
    <ligandPart>
        <name>Fe</name>
        <dbReference type="ChEBI" id="CHEBI:18248"/>
    </ligandPart>
</feature>
<feature type="site" description="Transition state stabilizer" evidence="1">
    <location>
        <position position="122"/>
    </location>
</feature>
<feature type="cross-link" description="Tryptophyl-tyrosyl-methioninium (Trp-Tyr) (with M-298)" evidence="1">
    <location>
        <begin position="125"/>
        <end position="272"/>
    </location>
</feature>
<feature type="cross-link" description="Tryptophyl-tyrosyl-methioninium (Tyr-Met) (with W-125)" evidence="1">
    <location>
        <begin position="272"/>
        <end position="298"/>
    </location>
</feature>
<proteinExistence type="inferred from homology"/>
<protein>
    <recommendedName>
        <fullName evidence="1">Catalase-peroxidase</fullName>
        <shortName evidence="1">CP</shortName>
        <ecNumber evidence="1">1.11.1.21</ecNumber>
    </recommendedName>
    <alternativeName>
        <fullName evidence="1">Peroxidase/catalase</fullName>
    </alternativeName>
</protein>
<keyword id="KW-0349">Heme</keyword>
<keyword id="KW-0376">Hydrogen peroxide</keyword>
<keyword id="KW-0408">Iron</keyword>
<keyword id="KW-0479">Metal-binding</keyword>
<keyword id="KW-0560">Oxidoreductase</keyword>
<keyword id="KW-0575">Peroxidase</keyword>
<keyword id="KW-0732">Signal</keyword>
<comment type="function">
    <text evidence="1">Bifunctional enzyme with both catalase and broad-spectrum peroxidase activity.</text>
</comment>
<comment type="catalytic activity">
    <reaction evidence="1">
        <text>H2O2 + AH2 = A + 2 H2O</text>
        <dbReference type="Rhea" id="RHEA:30275"/>
        <dbReference type="ChEBI" id="CHEBI:13193"/>
        <dbReference type="ChEBI" id="CHEBI:15377"/>
        <dbReference type="ChEBI" id="CHEBI:16240"/>
        <dbReference type="ChEBI" id="CHEBI:17499"/>
        <dbReference type="EC" id="1.11.1.21"/>
    </reaction>
</comment>
<comment type="catalytic activity">
    <reaction evidence="1">
        <text>2 H2O2 = O2 + 2 H2O</text>
        <dbReference type="Rhea" id="RHEA:20309"/>
        <dbReference type="ChEBI" id="CHEBI:15377"/>
        <dbReference type="ChEBI" id="CHEBI:15379"/>
        <dbReference type="ChEBI" id="CHEBI:16240"/>
        <dbReference type="EC" id="1.11.1.21"/>
    </reaction>
</comment>
<comment type="cofactor">
    <cofactor evidence="1">
        <name>heme b</name>
        <dbReference type="ChEBI" id="CHEBI:60344"/>
    </cofactor>
    <text evidence="1">Binds 1 heme b (iron(II)-protoporphyrin IX) group per dimer.</text>
</comment>
<comment type="subunit">
    <text evidence="1">Homodimer or homotetramer.</text>
</comment>
<comment type="PTM">
    <text evidence="1">Formation of the three residue Trp-Tyr-Met cross-link is important for the catalase, but not the peroxidase activity of the enzyme.</text>
</comment>
<comment type="similarity">
    <text evidence="1">Belongs to the peroxidase family. Peroxidase/catalase subfamily.</text>
</comment>
<gene>
    <name evidence="1" type="primary">katG</name>
    <name type="ordered locus">XF_2232</name>
</gene>
<sequence length="781" mass="86891">MLYIYYLFKSLFFHTLFVFSIYKDCPYMRASSPETTSAVKCPFNKTAVEGTHNKDWWPNQLRVDLLHQHSNKSNPLGETFDYAKEFQKLDYAALKRDLHALMTDSQDWWPADFGHYGGLFIRMAWHSAGTYRIGDGRGGAGRGQQRFAPLNSWPDNVSLDKARRLLWPIKKKYGQQISWADLIVLSGNVALESMGFKTFGFAGGRVDTWEPDQDVYWGRETTWLGGDVRYGAVSEGVHHPDEHRGAKEKAAKNSDSRVLENPLAAVQMGLIYVNPEGPDGRPDPLASARDIRETFARMAMNDEETVALIAGGHTFGKTHGAAPADNVGPEPEAGELEQQGLGWHNRFGSGKAGDTITSGLEVTWTKTPTQWSNDFFEHLFGYEWELTKSPAGAYQWVAKNAAATIPHAHDPSKKLLPMMLTSDLALRFDPIYEKISRHFHAHPDQFADVFARAWFKLMHRDMGPRVRYLGPEVPVEELIWQDPVPKVSHVLVDAQDLLALKQKISASGLGISQLVSTAWASASTFRGSDKRGGANGGRLCLAPQSQWEVNQPQQLSVVLETLRRVQTEFNAQAGDKRISLADLIVLAGGVGVEQAAKRAGIVVEVPFVPGRTDALQEQTDVSSFAPLEPFADGFRNYVKGDEVVPSEHLLIDRAQLLTLTAPEMTVLIGGLRVLGANVGGVKHGVFTDRLGTLSNDFFINLLDMGTEWAPVSKERHVFEGRDRRTGVLKWTGTRVDLVFGSNALLRALAEFYAAVDAQEKFVRDFVAAWSKVMHLDRFDLV</sequence>